<evidence type="ECO:0000255" key="1">
    <source>
        <dbReference type="HAMAP-Rule" id="MF_00462"/>
    </source>
</evidence>
<gene>
    <name evidence="1" type="primary">rnfD</name>
    <name type="ordered locus">APP7_0171</name>
</gene>
<comment type="function">
    <text evidence="1">Part of a membrane-bound complex that couples electron transfer with translocation of ions across the membrane.</text>
</comment>
<comment type="cofactor">
    <cofactor evidence="1">
        <name>FMN</name>
        <dbReference type="ChEBI" id="CHEBI:58210"/>
    </cofactor>
</comment>
<comment type="subunit">
    <text evidence="1">The complex is composed of six subunits: RnfA, RnfB, RnfC, RnfD, RnfE and RnfG.</text>
</comment>
<comment type="subcellular location">
    <subcellularLocation>
        <location evidence="1">Cell inner membrane</location>
        <topology evidence="1">Multi-pass membrane protein</topology>
    </subcellularLocation>
</comment>
<comment type="similarity">
    <text evidence="1">Belongs to the NqrB/RnfD family.</text>
</comment>
<reference key="1">
    <citation type="submission" date="2008-06" db="EMBL/GenBank/DDBJ databases">
        <title>Genome and proteome analysis of A. pleuropneumoniae serotype 7.</title>
        <authorList>
            <person name="Linke B."/>
            <person name="Buettner F."/>
            <person name="Martinez-Arias R."/>
            <person name="Goesmann A."/>
            <person name="Baltes N."/>
            <person name="Tegetmeyer H."/>
            <person name="Singh M."/>
            <person name="Gerlach G.F."/>
        </authorList>
    </citation>
    <scope>NUCLEOTIDE SEQUENCE [LARGE SCALE GENOMIC DNA]</scope>
    <source>
        <strain>AP76</strain>
    </source>
</reference>
<proteinExistence type="inferred from homology"/>
<keyword id="KW-0997">Cell inner membrane</keyword>
<keyword id="KW-1003">Cell membrane</keyword>
<keyword id="KW-0249">Electron transport</keyword>
<keyword id="KW-0285">Flavoprotein</keyword>
<keyword id="KW-0288">FMN</keyword>
<keyword id="KW-0472">Membrane</keyword>
<keyword id="KW-0597">Phosphoprotein</keyword>
<keyword id="KW-1278">Translocase</keyword>
<keyword id="KW-0812">Transmembrane</keyword>
<keyword id="KW-1133">Transmembrane helix</keyword>
<keyword id="KW-0813">Transport</keyword>
<accession>B3H011</accession>
<sequence length="348" mass="37657">MFKMVSSPHTHSSNLTAKFMLWVMVAMLPALGMQAYFFGYGVFIQVFIALLLAVAIEIAIAKLRRKLTAFYVADLSGVLTALILAMSIPPYAPYWIIVIGIIVALLLAKHSYGGLGQNLFNPAMVAYALLLVSFPVQMTGWLVPIDLLNEPPTFGDAISLVFSGVTSDGFSVHQLLGSVDGIAQATPLDSAKTSMQKLGVEGVLQSPIFSGLFANGWWQINLAFLAGGLLLIYKSIIHWQIPAAMLGMFALLSGLTDLLLPHTHLNVVSQLFSGAMMFGAFFIATDPVTASITPRGKLIFGGLIGLFVYLIRYYGNYPDAVAFSVLLANICVPLIDHYTQPRLYGSGR</sequence>
<organism>
    <name type="scientific">Actinobacillus pleuropneumoniae serotype 7 (strain AP76)</name>
    <dbReference type="NCBI Taxonomy" id="537457"/>
    <lineage>
        <taxon>Bacteria</taxon>
        <taxon>Pseudomonadati</taxon>
        <taxon>Pseudomonadota</taxon>
        <taxon>Gammaproteobacteria</taxon>
        <taxon>Pasteurellales</taxon>
        <taxon>Pasteurellaceae</taxon>
        <taxon>Actinobacillus</taxon>
    </lineage>
</organism>
<feature type="chain" id="PRO_1000125373" description="Ion-translocating oxidoreductase complex subunit D">
    <location>
        <begin position="1"/>
        <end position="348"/>
    </location>
</feature>
<feature type="transmembrane region" description="Helical" evidence="1">
    <location>
        <begin position="15"/>
        <end position="35"/>
    </location>
</feature>
<feature type="transmembrane region" description="Helical" evidence="1">
    <location>
        <begin position="36"/>
        <end position="56"/>
    </location>
</feature>
<feature type="transmembrane region" description="Helical" evidence="1">
    <location>
        <begin position="67"/>
        <end position="87"/>
    </location>
</feature>
<feature type="transmembrane region" description="Helical" evidence="1">
    <location>
        <begin position="88"/>
        <end position="108"/>
    </location>
</feature>
<feature type="transmembrane region" description="Helical" evidence="1">
    <location>
        <begin position="125"/>
        <end position="145"/>
    </location>
</feature>
<feature type="transmembrane region" description="Helical" evidence="1">
    <location>
        <begin position="212"/>
        <end position="232"/>
    </location>
</feature>
<feature type="transmembrane region" description="Helical" evidence="1">
    <location>
        <begin position="241"/>
        <end position="261"/>
    </location>
</feature>
<feature type="transmembrane region" description="Helical" evidence="1">
    <location>
        <begin position="265"/>
        <end position="285"/>
    </location>
</feature>
<feature type="transmembrane region" description="Helical" evidence="1">
    <location>
        <begin position="298"/>
        <end position="318"/>
    </location>
</feature>
<feature type="transmembrane region" description="Helical" evidence="1">
    <location>
        <begin position="320"/>
        <end position="340"/>
    </location>
</feature>
<feature type="modified residue" description="FMN phosphoryl threonine" evidence="1">
    <location>
        <position position="186"/>
    </location>
</feature>
<name>RNFD_ACTP7</name>
<protein>
    <recommendedName>
        <fullName evidence="1">Ion-translocating oxidoreductase complex subunit D</fullName>
        <ecNumber evidence="1">7.-.-.-</ecNumber>
    </recommendedName>
    <alternativeName>
        <fullName evidence="1">Rnf electron transport complex subunit D</fullName>
    </alternativeName>
</protein>
<dbReference type="EC" id="7.-.-.-" evidence="1"/>
<dbReference type="EMBL" id="CP001091">
    <property type="protein sequence ID" value="ACE60823.1"/>
    <property type="molecule type" value="Genomic_DNA"/>
</dbReference>
<dbReference type="RefSeq" id="WP_012478298.1">
    <property type="nucleotide sequence ID" value="NC_010939.1"/>
</dbReference>
<dbReference type="SMR" id="B3H011"/>
<dbReference type="KEGG" id="apa:APP7_0171"/>
<dbReference type="HOGENOM" id="CLU_042020_0_0_6"/>
<dbReference type="Proteomes" id="UP000001226">
    <property type="component" value="Chromosome"/>
</dbReference>
<dbReference type="GO" id="GO:0005886">
    <property type="term" value="C:plasma membrane"/>
    <property type="evidence" value="ECO:0007669"/>
    <property type="project" value="UniProtKB-SubCell"/>
</dbReference>
<dbReference type="GO" id="GO:0022900">
    <property type="term" value="P:electron transport chain"/>
    <property type="evidence" value="ECO:0007669"/>
    <property type="project" value="UniProtKB-UniRule"/>
</dbReference>
<dbReference type="GO" id="GO:0055085">
    <property type="term" value="P:transmembrane transport"/>
    <property type="evidence" value="ECO:0007669"/>
    <property type="project" value="InterPro"/>
</dbReference>
<dbReference type="HAMAP" id="MF_00462">
    <property type="entry name" value="RsxD_RnfD"/>
    <property type="match status" value="1"/>
</dbReference>
<dbReference type="InterPro" id="IPR004338">
    <property type="entry name" value="NqrB/RnfD"/>
</dbReference>
<dbReference type="InterPro" id="IPR011303">
    <property type="entry name" value="RnfD_bac"/>
</dbReference>
<dbReference type="NCBIfam" id="NF002011">
    <property type="entry name" value="PRK00816.1"/>
    <property type="match status" value="1"/>
</dbReference>
<dbReference type="NCBIfam" id="TIGR01946">
    <property type="entry name" value="rnfD"/>
    <property type="match status" value="1"/>
</dbReference>
<dbReference type="PANTHER" id="PTHR30578">
    <property type="entry name" value="ELECTRON TRANSPORT COMPLEX PROTEIN RNFD"/>
    <property type="match status" value="1"/>
</dbReference>
<dbReference type="PANTHER" id="PTHR30578:SF0">
    <property type="entry name" value="ION-TRANSLOCATING OXIDOREDUCTASE COMPLEX SUBUNIT D"/>
    <property type="match status" value="1"/>
</dbReference>
<dbReference type="Pfam" id="PF03116">
    <property type="entry name" value="NQR2_RnfD_RnfE"/>
    <property type="match status" value="1"/>
</dbReference>